<feature type="chain" id="PRO_0000453339" description="Diels-Alderase cghA">
    <location>
        <begin position="1"/>
        <end position="503"/>
    </location>
</feature>
<feature type="strand" evidence="6">
    <location>
        <begin position="114"/>
        <end position="118"/>
    </location>
</feature>
<feature type="strand" evidence="6">
    <location>
        <begin position="147"/>
        <end position="149"/>
    </location>
</feature>
<feature type="strand" evidence="6">
    <location>
        <begin position="154"/>
        <end position="162"/>
    </location>
</feature>
<feature type="strand" evidence="6">
    <location>
        <begin position="166"/>
        <end position="177"/>
    </location>
</feature>
<feature type="helix" evidence="6">
    <location>
        <begin position="178"/>
        <end position="180"/>
    </location>
</feature>
<feature type="strand" evidence="6">
    <location>
        <begin position="185"/>
        <end position="193"/>
    </location>
</feature>
<feature type="strand" evidence="6">
    <location>
        <begin position="198"/>
        <end position="204"/>
    </location>
</feature>
<feature type="strand" evidence="6">
    <location>
        <begin position="206"/>
        <end position="215"/>
    </location>
</feature>
<feature type="strand" evidence="6">
    <location>
        <begin position="219"/>
        <end position="227"/>
    </location>
</feature>
<feature type="strand" evidence="6">
    <location>
        <begin position="240"/>
        <end position="245"/>
    </location>
</feature>
<feature type="strand" evidence="6">
    <location>
        <begin position="249"/>
        <end position="258"/>
    </location>
</feature>
<feature type="turn" evidence="6">
    <location>
        <begin position="259"/>
        <end position="261"/>
    </location>
</feature>
<feature type="strand" evidence="6">
    <location>
        <begin position="262"/>
        <end position="270"/>
    </location>
</feature>
<feature type="helix" evidence="6">
    <location>
        <begin position="280"/>
        <end position="283"/>
    </location>
</feature>
<feature type="strand" evidence="6">
    <location>
        <begin position="284"/>
        <end position="286"/>
    </location>
</feature>
<feature type="strand" evidence="6">
    <location>
        <begin position="289"/>
        <end position="308"/>
    </location>
</feature>
<feature type="strand" evidence="6">
    <location>
        <begin position="318"/>
        <end position="324"/>
    </location>
</feature>
<feature type="turn" evidence="6">
    <location>
        <begin position="326"/>
        <end position="329"/>
    </location>
</feature>
<feature type="strand" evidence="6">
    <location>
        <begin position="331"/>
        <end position="341"/>
    </location>
</feature>
<feature type="helix" evidence="6">
    <location>
        <begin position="343"/>
        <end position="345"/>
    </location>
</feature>
<feature type="strand" evidence="6">
    <location>
        <begin position="347"/>
        <end position="357"/>
    </location>
</feature>
<feature type="strand" evidence="6">
    <location>
        <begin position="360"/>
        <end position="369"/>
    </location>
</feature>
<feature type="helix" evidence="6">
    <location>
        <begin position="371"/>
        <end position="373"/>
    </location>
</feature>
<feature type="strand" evidence="6">
    <location>
        <begin position="377"/>
        <end position="385"/>
    </location>
</feature>
<feature type="strand" evidence="6">
    <location>
        <begin position="388"/>
        <end position="393"/>
    </location>
</feature>
<feature type="strand" evidence="6">
    <location>
        <begin position="410"/>
        <end position="416"/>
    </location>
</feature>
<feature type="strand" evidence="6">
    <location>
        <begin position="418"/>
        <end position="421"/>
    </location>
</feature>
<feature type="strand" evidence="6">
    <location>
        <begin position="425"/>
        <end position="427"/>
    </location>
</feature>
<feature type="strand" evidence="6">
    <location>
        <begin position="431"/>
        <end position="438"/>
    </location>
</feature>
<feature type="strand" evidence="6">
    <location>
        <begin position="446"/>
        <end position="463"/>
    </location>
</feature>
<feature type="strand" evidence="6">
    <location>
        <begin position="471"/>
        <end position="483"/>
    </location>
</feature>
<feature type="strand" evidence="6">
    <location>
        <begin position="490"/>
        <end position="500"/>
    </location>
</feature>
<evidence type="ECO:0000269" key="1">
    <source>
    </source>
</evidence>
<evidence type="ECO:0000303" key="2">
    <source>
    </source>
</evidence>
<evidence type="ECO:0000305" key="3"/>
<evidence type="ECO:0007744" key="4">
    <source>
        <dbReference type="PDB" id="6KAW"/>
    </source>
</evidence>
<evidence type="ECO:0007744" key="5">
    <source>
        <dbReference type="PDB" id="6KBC"/>
    </source>
</evidence>
<evidence type="ECO:0007829" key="6">
    <source>
        <dbReference type="PDB" id="6KBC"/>
    </source>
</evidence>
<name>CGHA_CHAGB</name>
<gene>
    <name evidence="2" type="primary">cghA</name>
    <name type="ORF">CHGG_02368</name>
</gene>
<reference key="1">
    <citation type="journal article" date="2015" name="Genome Announc.">
        <title>Draft genome sequence of the cellulolytic fungus Chaetomium globosum.</title>
        <authorList>
            <person name="Cuomo C.A."/>
            <person name="Untereiner W.A."/>
            <person name="Ma L.-J."/>
            <person name="Grabherr M."/>
            <person name="Birren B.W."/>
        </authorList>
    </citation>
    <scope>NUCLEOTIDE SEQUENCE [LARGE SCALE GENOMIC DNA]</scope>
    <source>
        <strain>ATCC 6205 / CBS 148.51 / DSM 1962 / NBRC 6347 / NRRL 1970</strain>
    </source>
</reference>
<reference key="2">
    <citation type="journal article" date="2015" name="ChemBioChem">
        <title>Involvement of lipocalin-like CghA in decalin-forming stereoselective intramolecular [4+2] cycloaddition.</title>
        <authorList>
            <person name="Sato M."/>
            <person name="Yagishita F."/>
            <person name="Mino T."/>
            <person name="Uchiyama N."/>
            <person name="Patel A."/>
            <person name="Chooi Y.H."/>
            <person name="Goda Y."/>
            <person name="Xu W."/>
            <person name="Noguchi H."/>
            <person name="Yamamoto T."/>
            <person name="Hotta K."/>
            <person name="Houk K.N."/>
            <person name="Tang Y."/>
            <person name="Watanabe K."/>
        </authorList>
    </citation>
    <scope>FUNCTION</scope>
    <scope>CATALYTIC ACTIVITY</scope>
    <scope>PATHWAY</scope>
</reference>
<reference evidence="5" key="3">
    <citation type="submission" date="2019-06" db="PDB data bank">
        <title>Crystal structure of CghA with Sch210972.</title>
        <authorList>
            <person name="Hara K."/>
            <person name="Hashimoto H."/>
            <person name="Maeda N."/>
            <person name="Sato M."/>
            <person name="Watanabe K."/>
        </authorList>
    </citation>
    <scope>X-RAY CRYSTALLOGRAPHY (1.99 ANGSTROMS) OF 109-503</scope>
</reference>
<reference evidence="4" key="4">
    <citation type="submission" date="2019-06" db="PDB data bank">
        <title>Crystal structure of CghA.</title>
        <authorList>
            <person name="Hara K."/>
            <person name="Hashimoto H."/>
            <person name="Yokoyama M."/>
            <person name="Sato M."/>
            <person name="Watanabe K."/>
        </authorList>
    </citation>
    <scope>X-RAY CRYSTALLOGRAPHY (2.01 ANGSTROMS) OF 109-503</scope>
</reference>
<keyword id="KW-0002">3D-structure</keyword>
<keyword id="KW-0413">Isomerase</keyword>
<keyword id="KW-1185">Reference proteome</keyword>
<comment type="function">
    <text evidence="1">Diels-Alderase; part of the gene cluster that mediates the biosynthesis of the tetramic acid Sch210972, a potential anti-HIV fungal natural product that contains a decalin core (PubMed:26360642). The PKS module of cghG together with the enoylreductase cghC catalyze the formation of the polyketide unit which is then conjugated to 4-hydroxyl-4-methyl glutamate (HMG) by the condensation domain of the cghG NRPS module (PubMed:26360642). One unique structural feature of Sch210972 is the tetramic acid motif proposed to be derived from the non-proteinogenic amino acid HMG, by a Dieckmann-type condensation catalyzed by the reductase domain of cghG (PubMed:26360642). The aldolase cghB catalyzes the aldol condensation of 2 molecules of pyruvic acid to yield the intermediate 4-hydroxyl-4-methyl-2-oxoglutarate (HMOG), which can then be stereoselectively transaminated by an unidentified enzyme to form HMG (PubMed:26360642). The Diels-Alderase cghA then uses the Dieckmann product released by cghG as substrate and catalyzes the Diels-Alder cycloaddition to form the decalin ring of Sch210972 (PubMed:26360642). CghA also suppresses the nonenzymatic formation of the alternative stereoisomer (PubMed:26360642).</text>
</comment>
<comment type="catalytic activity">
    <reaction evidence="1">
        <text>(2S)-3-[(2S)-3,5-dioxo-4-[(2E,4R,6R,8E,10E,12E)-4,6,12-trimethyltetradeca-2,8,10,12-tetraenoyl]pyrrolidin-2-yl]-2-hydroxy-2-methylpropanoate = sch 210972</text>
        <dbReference type="Rhea" id="RHEA:67268"/>
        <dbReference type="ChEBI" id="CHEBI:167897"/>
        <dbReference type="ChEBI" id="CHEBI:167907"/>
    </reaction>
    <physiologicalReaction direction="left-to-right" evidence="1">
        <dbReference type="Rhea" id="RHEA:67269"/>
    </physiologicalReaction>
</comment>
<comment type="pathway">
    <text evidence="1">Secondary metabolite biosynthesis.</text>
</comment>
<comment type="similarity">
    <text evidence="3">Belongs to the Diels-Alderase family.</text>
</comment>
<organism>
    <name type="scientific">Chaetomium globosum (strain ATCC 6205 / CBS 148.51 / DSM 1962 / NBRC 6347 / NRRL 1970)</name>
    <name type="common">Soil fungus</name>
    <dbReference type="NCBI Taxonomy" id="306901"/>
    <lineage>
        <taxon>Eukaryota</taxon>
        <taxon>Fungi</taxon>
        <taxon>Dikarya</taxon>
        <taxon>Ascomycota</taxon>
        <taxon>Pezizomycotina</taxon>
        <taxon>Sordariomycetes</taxon>
        <taxon>Sordariomycetidae</taxon>
        <taxon>Sordariales</taxon>
        <taxon>Chaetomiaceae</taxon>
        <taxon>Chaetomium</taxon>
    </lineage>
</organism>
<sequence>MSGTPRTMPPLMMDWAEQPNGRAKPRGMVISRVPYLPWYLLGAVRVGGVSNARPNSRPYSAEQADFGRISQTALCRYRSMPVRNPTPYGVGTQVWRAVVLHHLPLTAAMAAAPFISLLQGDQFLADTPIPGSAVIPNSGNLFPKWADKLSPTAVETWLFDAMAEDGSAAFTVSFFRDGSQAPASFRAAINAAWSDGTVWSQHLVVPVSVVTSDGPDVGHGHVAGVWRTEEPQSNDTTRTTASFDVAADLSTTTVVFDAPGRITGSLTHRSLGYPTLPQSDREAEVAPGAYWFRPIAMANATVDLTFHIDDPTNPDKKTEKRMVLGPEQGAFGGMDRSWLPMVWGKEATDALFVRAQAGPYVMAVMRLVSKPHKYYQNTVNAALYRDGKIVSNALRSLPPDRRDTAATADAVRTEKLYDGDGLVAKYRDKNVGYRLEFRSAGPEREKWSFDLRHHQAWWAKPTSRPGPDGTGNSGFVVEVTGGLVGSEESVHGWGMTGEVELSD</sequence>
<protein>
    <recommendedName>
        <fullName evidence="2">Diels-Alderase cghA</fullName>
        <ecNumber evidence="1">5.5.1.-</ecNumber>
    </recommendedName>
    <alternativeName>
        <fullName evidence="2">Sch210972 biosynthesis cluster protein A</fullName>
    </alternativeName>
</protein>
<proteinExistence type="evidence at protein level"/>
<accession>Q2HBN6</accession>
<dbReference type="EC" id="5.5.1.-" evidence="1"/>
<dbReference type="EMBL" id="CH408030">
    <property type="protein sequence ID" value="EAQ90433.1"/>
    <property type="molecule type" value="Genomic_DNA"/>
</dbReference>
<dbReference type="RefSeq" id="XP_001228884.1">
    <property type="nucleotide sequence ID" value="XM_001228883.1"/>
</dbReference>
<dbReference type="PDB" id="6KAW">
    <property type="method" value="X-ray"/>
    <property type="resolution" value="2.01 A"/>
    <property type="chains" value="A=109-503"/>
</dbReference>
<dbReference type="PDB" id="6KBC">
    <property type="method" value="X-ray"/>
    <property type="resolution" value="1.99 A"/>
    <property type="chains" value="A=109-503"/>
</dbReference>
<dbReference type="PDBsum" id="6KAW"/>
<dbReference type="PDBsum" id="6KBC"/>
<dbReference type="SMR" id="Q2HBN6"/>
<dbReference type="STRING" id="306901.Q2HBN6"/>
<dbReference type="GeneID" id="4388353"/>
<dbReference type="VEuPathDB" id="FungiDB:CHGG_02368"/>
<dbReference type="eggNOG" id="ENOG502SISX">
    <property type="taxonomic scope" value="Eukaryota"/>
</dbReference>
<dbReference type="HOGENOM" id="CLU_041924_2_0_1"/>
<dbReference type="InParanoid" id="Q2HBN6"/>
<dbReference type="OMA" id="VGPYAMQ"/>
<dbReference type="OrthoDB" id="5344254at2759"/>
<dbReference type="BioCyc" id="MetaCyc:MONOMER-21736"/>
<dbReference type="Proteomes" id="UP000001056">
    <property type="component" value="Unassembled WGS sequence"/>
</dbReference>
<dbReference type="GO" id="GO:0016853">
    <property type="term" value="F:isomerase activity"/>
    <property type="evidence" value="ECO:0007669"/>
    <property type="project" value="UniProtKB-KW"/>
</dbReference>
<dbReference type="InterPro" id="IPR054499">
    <property type="entry name" value="DA_C"/>
</dbReference>
<dbReference type="Pfam" id="PF22903">
    <property type="entry name" value="DA_C"/>
    <property type="match status" value="1"/>
</dbReference>
<dbReference type="Pfam" id="PF24137">
    <property type="entry name" value="DA_N"/>
    <property type="match status" value="1"/>
</dbReference>